<dbReference type="EC" id="1.1.1.86" evidence="1"/>
<dbReference type="EMBL" id="AF124757">
    <property type="protein sequence ID" value="AAD29665.1"/>
    <property type="molecule type" value="Genomic_DNA"/>
</dbReference>
<dbReference type="EMBL" id="AE008692">
    <property type="protein sequence ID" value="AAV89765.1"/>
    <property type="molecule type" value="Genomic_DNA"/>
</dbReference>
<dbReference type="RefSeq" id="WP_011240968.1">
    <property type="nucleotide sequence ID" value="NZ_CP035711.1"/>
</dbReference>
<dbReference type="SMR" id="Q9X5F8"/>
<dbReference type="STRING" id="264203.ZMO1141"/>
<dbReference type="GeneID" id="79903734"/>
<dbReference type="KEGG" id="zmo:ZMO1141"/>
<dbReference type="eggNOG" id="COG0059">
    <property type="taxonomic scope" value="Bacteria"/>
</dbReference>
<dbReference type="HOGENOM" id="CLU_033821_0_1_5"/>
<dbReference type="UniPathway" id="UPA00047">
    <property type="reaction ID" value="UER00056"/>
</dbReference>
<dbReference type="UniPathway" id="UPA00049">
    <property type="reaction ID" value="UER00060"/>
</dbReference>
<dbReference type="Proteomes" id="UP000001173">
    <property type="component" value="Chromosome"/>
</dbReference>
<dbReference type="GO" id="GO:0005829">
    <property type="term" value="C:cytosol"/>
    <property type="evidence" value="ECO:0007669"/>
    <property type="project" value="TreeGrafter"/>
</dbReference>
<dbReference type="GO" id="GO:0004455">
    <property type="term" value="F:ketol-acid reductoisomerase activity"/>
    <property type="evidence" value="ECO:0007669"/>
    <property type="project" value="UniProtKB-UniRule"/>
</dbReference>
<dbReference type="GO" id="GO:0000287">
    <property type="term" value="F:magnesium ion binding"/>
    <property type="evidence" value="ECO:0007669"/>
    <property type="project" value="UniProtKB-UniRule"/>
</dbReference>
<dbReference type="GO" id="GO:0050661">
    <property type="term" value="F:NADP binding"/>
    <property type="evidence" value="ECO:0007669"/>
    <property type="project" value="InterPro"/>
</dbReference>
<dbReference type="GO" id="GO:0009097">
    <property type="term" value="P:isoleucine biosynthetic process"/>
    <property type="evidence" value="ECO:0007669"/>
    <property type="project" value="UniProtKB-UniRule"/>
</dbReference>
<dbReference type="GO" id="GO:0009099">
    <property type="term" value="P:L-valine biosynthetic process"/>
    <property type="evidence" value="ECO:0007669"/>
    <property type="project" value="UniProtKB-UniRule"/>
</dbReference>
<dbReference type="FunFam" id="3.40.50.720:FF:000023">
    <property type="entry name" value="Ketol-acid reductoisomerase (NADP(+))"/>
    <property type="match status" value="1"/>
</dbReference>
<dbReference type="Gene3D" id="6.10.240.10">
    <property type="match status" value="1"/>
</dbReference>
<dbReference type="Gene3D" id="3.40.50.720">
    <property type="entry name" value="NAD(P)-binding Rossmann-like Domain"/>
    <property type="match status" value="1"/>
</dbReference>
<dbReference type="HAMAP" id="MF_00435">
    <property type="entry name" value="IlvC"/>
    <property type="match status" value="1"/>
</dbReference>
<dbReference type="InterPro" id="IPR008927">
    <property type="entry name" value="6-PGluconate_DH-like_C_sf"/>
</dbReference>
<dbReference type="InterPro" id="IPR013023">
    <property type="entry name" value="KARI"/>
</dbReference>
<dbReference type="InterPro" id="IPR000506">
    <property type="entry name" value="KARI_C"/>
</dbReference>
<dbReference type="InterPro" id="IPR013116">
    <property type="entry name" value="KARI_N"/>
</dbReference>
<dbReference type="InterPro" id="IPR014359">
    <property type="entry name" value="KARI_prok"/>
</dbReference>
<dbReference type="InterPro" id="IPR036291">
    <property type="entry name" value="NAD(P)-bd_dom_sf"/>
</dbReference>
<dbReference type="NCBIfam" id="TIGR00465">
    <property type="entry name" value="ilvC"/>
    <property type="match status" value="1"/>
</dbReference>
<dbReference type="NCBIfam" id="NF004017">
    <property type="entry name" value="PRK05479.1"/>
    <property type="match status" value="1"/>
</dbReference>
<dbReference type="NCBIfam" id="NF009940">
    <property type="entry name" value="PRK13403.1"/>
    <property type="match status" value="1"/>
</dbReference>
<dbReference type="PANTHER" id="PTHR21371">
    <property type="entry name" value="KETOL-ACID REDUCTOISOMERASE, MITOCHONDRIAL"/>
    <property type="match status" value="1"/>
</dbReference>
<dbReference type="PANTHER" id="PTHR21371:SF1">
    <property type="entry name" value="KETOL-ACID REDUCTOISOMERASE, MITOCHONDRIAL"/>
    <property type="match status" value="1"/>
</dbReference>
<dbReference type="Pfam" id="PF01450">
    <property type="entry name" value="KARI_C"/>
    <property type="match status" value="1"/>
</dbReference>
<dbReference type="Pfam" id="PF07991">
    <property type="entry name" value="KARI_N"/>
    <property type="match status" value="1"/>
</dbReference>
<dbReference type="PIRSF" id="PIRSF000116">
    <property type="entry name" value="IlvC_gammaproteo"/>
    <property type="match status" value="1"/>
</dbReference>
<dbReference type="SUPFAM" id="SSF48179">
    <property type="entry name" value="6-phosphogluconate dehydrogenase C-terminal domain-like"/>
    <property type="match status" value="1"/>
</dbReference>
<dbReference type="SUPFAM" id="SSF51735">
    <property type="entry name" value="NAD(P)-binding Rossmann-fold domains"/>
    <property type="match status" value="1"/>
</dbReference>
<dbReference type="PROSITE" id="PS51851">
    <property type="entry name" value="KARI_C"/>
    <property type="match status" value="1"/>
</dbReference>
<dbReference type="PROSITE" id="PS51850">
    <property type="entry name" value="KARI_N"/>
    <property type="match status" value="1"/>
</dbReference>
<organism>
    <name type="scientific">Zymomonas mobilis subsp. mobilis (strain ATCC 31821 / ZM4 / CP4)</name>
    <dbReference type="NCBI Taxonomy" id="264203"/>
    <lineage>
        <taxon>Bacteria</taxon>
        <taxon>Pseudomonadati</taxon>
        <taxon>Pseudomonadota</taxon>
        <taxon>Alphaproteobacteria</taxon>
        <taxon>Sphingomonadales</taxon>
        <taxon>Zymomonadaceae</taxon>
        <taxon>Zymomonas</taxon>
    </lineage>
</organism>
<feature type="chain" id="PRO_0000151388" description="Ketol-acid reductoisomerase (NADP(+))">
    <location>
        <begin position="1"/>
        <end position="339"/>
    </location>
</feature>
<feature type="domain" description="KARI N-terminal Rossmann" evidence="2">
    <location>
        <begin position="1"/>
        <end position="182"/>
    </location>
</feature>
<feature type="domain" description="KARI C-terminal knotted" evidence="3">
    <location>
        <begin position="183"/>
        <end position="328"/>
    </location>
</feature>
<feature type="active site" evidence="1">
    <location>
        <position position="108"/>
    </location>
</feature>
<feature type="binding site" evidence="1">
    <location>
        <begin position="24"/>
        <end position="27"/>
    </location>
    <ligand>
        <name>NADP(+)</name>
        <dbReference type="ChEBI" id="CHEBI:58349"/>
    </ligand>
</feature>
<feature type="binding site" evidence="1">
    <location>
        <position position="48"/>
    </location>
    <ligand>
        <name>NADP(+)</name>
        <dbReference type="ChEBI" id="CHEBI:58349"/>
    </ligand>
</feature>
<feature type="binding site" evidence="1">
    <location>
        <position position="51"/>
    </location>
    <ligand>
        <name>NADP(+)</name>
        <dbReference type="ChEBI" id="CHEBI:58349"/>
    </ligand>
</feature>
<feature type="binding site" evidence="1">
    <location>
        <position position="53"/>
    </location>
    <ligand>
        <name>NADP(+)</name>
        <dbReference type="ChEBI" id="CHEBI:58349"/>
    </ligand>
</feature>
<feature type="binding site" evidence="1">
    <location>
        <begin position="83"/>
        <end position="86"/>
    </location>
    <ligand>
        <name>NADP(+)</name>
        <dbReference type="ChEBI" id="CHEBI:58349"/>
    </ligand>
</feature>
<feature type="binding site" evidence="1">
    <location>
        <position position="134"/>
    </location>
    <ligand>
        <name>NADP(+)</name>
        <dbReference type="ChEBI" id="CHEBI:58349"/>
    </ligand>
</feature>
<feature type="binding site" evidence="1">
    <location>
        <position position="191"/>
    </location>
    <ligand>
        <name>Mg(2+)</name>
        <dbReference type="ChEBI" id="CHEBI:18420"/>
        <label>1</label>
    </ligand>
</feature>
<feature type="binding site" evidence="1">
    <location>
        <position position="191"/>
    </location>
    <ligand>
        <name>Mg(2+)</name>
        <dbReference type="ChEBI" id="CHEBI:18420"/>
        <label>2</label>
    </ligand>
</feature>
<feature type="binding site" evidence="1">
    <location>
        <position position="195"/>
    </location>
    <ligand>
        <name>Mg(2+)</name>
        <dbReference type="ChEBI" id="CHEBI:18420"/>
        <label>1</label>
    </ligand>
</feature>
<feature type="binding site" evidence="1">
    <location>
        <position position="227"/>
    </location>
    <ligand>
        <name>Mg(2+)</name>
        <dbReference type="ChEBI" id="CHEBI:18420"/>
        <label>2</label>
    </ligand>
</feature>
<feature type="binding site" evidence="1">
    <location>
        <position position="231"/>
    </location>
    <ligand>
        <name>Mg(2+)</name>
        <dbReference type="ChEBI" id="CHEBI:18420"/>
        <label>2</label>
    </ligand>
</feature>
<feature type="binding site" evidence="1">
    <location>
        <position position="252"/>
    </location>
    <ligand>
        <name>substrate</name>
    </ligand>
</feature>
<name>ILVC_ZYMMO</name>
<accession>Q9X5F8</accession>
<accession>Q5NNE5</accession>
<reference key="1">
    <citation type="submission" date="1999-01" db="EMBL/GenBank/DDBJ databases">
        <authorList>
            <person name="Lee H.J."/>
            <person name="Kang H.S."/>
        </authorList>
    </citation>
    <scope>NUCLEOTIDE SEQUENCE [GENOMIC DNA]</scope>
    <source>
        <strain>ATCC 31821 / ZM4 / CP4</strain>
    </source>
</reference>
<reference key="2">
    <citation type="journal article" date="2005" name="Nat. Biotechnol.">
        <title>The genome sequence of the ethanologenic bacterium Zymomonas mobilis ZM4.</title>
        <authorList>
            <person name="Seo J.-S."/>
            <person name="Chong H."/>
            <person name="Park H.S."/>
            <person name="Yoon K.-O."/>
            <person name="Jung C."/>
            <person name="Kim J.J."/>
            <person name="Hong J.H."/>
            <person name="Kim H."/>
            <person name="Kim J.-H."/>
            <person name="Kil J.-I."/>
            <person name="Park C.J."/>
            <person name="Oh H.-M."/>
            <person name="Lee J.-S."/>
            <person name="Jin S.-J."/>
            <person name="Um H.-W."/>
            <person name="Lee H.-J."/>
            <person name="Oh S.-J."/>
            <person name="Kim J.Y."/>
            <person name="Kang H.L."/>
            <person name="Lee S.Y."/>
            <person name="Lee K.J."/>
            <person name="Kang H.S."/>
        </authorList>
    </citation>
    <scope>NUCLEOTIDE SEQUENCE [LARGE SCALE GENOMIC DNA]</scope>
    <source>
        <strain>ATCC 31821 / ZM4 / CP4</strain>
    </source>
</reference>
<keyword id="KW-0028">Amino-acid biosynthesis</keyword>
<keyword id="KW-0100">Branched-chain amino acid biosynthesis</keyword>
<keyword id="KW-0460">Magnesium</keyword>
<keyword id="KW-0479">Metal-binding</keyword>
<keyword id="KW-0521">NADP</keyword>
<keyword id="KW-0560">Oxidoreductase</keyword>
<keyword id="KW-1185">Reference proteome</keyword>
<evidence type="ECO:0000255" key="1">
    <source>
        <dbReference type="HAMAP-Rule" id="MF_00435"/>
    </source>
</evidence>
<evidence type="ECO:0000255" key="2">
    <source>
        <dbReference type="PROSITE-ProRule" id="PRU01197"/>
    </source>
</evidence>
<evidence type="ECO:0000255" key="3">
    <source>
        <dbReference type="PROSITE-ProRule" id="PRU01198"/>
    </source>
</evidence>
<gene>
    <name evidence="1" type="primary">ilvC</name>
    <name type="ordered locus">ZMO1141</name>
</gene>
<protein>
    <recommendedName>
        <fullName evidence="1">Ketol-acid reductoisomerase (NADP(+))</fullName>
        <shortName evidence="1">KARI</shortName>
        <ecNumber evidence="1">1.1.1.86</ecNumber>
    </recommendedName>
    <alternativeName>
        <fullName evidence="1">Acetohydroxy-acid isomeroreductase</fullName>
        <shortName evidence="1">AHIR</shortName>
    </alternativeName>
    <alternativeName>
        <fullName evidence="1">Alpha-keto-beta-hydroxylacyl reductoisomerase</fullName>
    </alternativeName>
    <alternativeName>
        <fullName evidence="1">Ketol-acid reductoisomerase type 1</fullName>
    </alternativeName>
    <alternativeName>
        <fullName evidence="1">Ketol-acid reductoisomerase type I</fullName>
    </alternativeName>
</protein>
<proteinExistence type="inferred from homology"/>
<comment type="function">
    <text evidence="1">Involved in the biosynthesis of branched-chain amino acids (BCAA). Catalyzes an alkyl-migration followed by a ketol-acid reduction of (S)-2-acetolactate (S2AL) to yield (R)-2,3-dihydroxy-isovalerate. In the isomerase reaction, S2AL is rearranged via a Mg-dependent methyl migration to produce 3-hydroxy-3-methyl-2-ketobutyrate (HMKB). In the reductase reaction, this 2-ketoacid undergoes a metal-dependent reduction by NADPH to yield (R)-2,3-dihydroxy-isovalerate.</text>
</comment>
<comment type="catalytic activity">
    <reaction evidence="1">
        <text>(2R)-2,3-dihydroxy-3-methylbutanoate + NADP(+) = (2S)-2-acetolactate + NADPH + H(+)</text>
        <dbReference type="Rhea" id="RHEA:22068"/>
        <dbReference type="ChEBI" id="CHEBI:15378"/>
        <dbReference type="ChEBI" id="CHEBI:49072"/>
        <dbReference type="ChEBI" id="CHEBI:57783"/>
        <dbReference type="ChEBI" id="CHEBI:58349"/>
        <dbReference type="ChEBI" id="CHEBI:58476"/>
        <dbReference type="EC" id="1.1.1.86"/>
    </reaction>
</comment>
<comment type="catalytic activity">
    <reaction evidence="1">
        <text>(2R,3R)-2,3-dihydroxy-3-methylpentanoate + NADP(+) = (S)-2-ethyl-2-hydroxy-3-oxobutanoate + NADPH + H(+)</text>
        <dbReference type="Rhea" id="RHEA:13493"/>
        <dbReference type="ChEBI" id="CHEBI:15378"/>
        <dbReference type="ChEBI" id="CHEBI:49256"/>
        <dbReference type="ChEBI" id="CHEBI:49258"/>
        <dbReference type="ChEBI" id="CHEBI:57783"/>
        <dbReference type="ChEBI" id="CHEBI:58349"/>
        <dbReference type="EC" id="1.1.1.86"/>
    </reaction>
</comment>
<comment type="cofactor">
    <cofactor evidence="1">
        <name>Mg(2+)</name>
        <dbReference type="ChEBI" id="CHEBI:18420"/>
    </cofactor>
    <text evidence="1">Binds 2 magnesium ions per subunit.</text>
</comment>
<comment type="pathway">
    <text evidence="1">Amino-acid biosynthesis; L-isoleucine biosynthesis; L-isoleucine from 2-oxobutanoate: step 2/4.</text>
</comment>
<comment type="pathway">
    <text evidence="1">Amino-acid biosynthesis; L-valine biosynthesis; L-valine from pyruvate: step 2/4.</text>
</comment>
<comment type="similarity">
    <text evidence="1">Belongs to the ketol-acid reductoisomerase family.</text>
</comment>
<sequence length="339" mass="36575">MKVYYDSDADLGLIKSKKIAILGYGSQGHAHAQNLRDSGVAEVAIALRPDSASVKKAQDAGFKVLTNAEAAKWADILMILAPDEHQAAIYAEDLKDNLRPGSAIAFAHGLNIHFGLIEPRKDIDVFMIAPKGPGHTVRSEYVRGGGVPCLVAVDQDASGNAHDIALAYASGIGGGRSGVIETTFREEVETDLFGEQAVLCGGLTALITAGFETLTEAGYAPEMAFFECMHEMKLIVDLIYEAGIANMRYSISNTAEYGDIVSGPRVINEESKKAMKAILDDIQSGRFVSKFVLDNRAGQPELKAARKRMAAHPIEQVGARLRKMMPWIASNKLVDKARN</sequence>